<reference evidence="4" key="1">
    <citation type="journal article" date="2007" name="Nature">
        <title>Evolution of genes and genomes on the Drosophila phylogeny.</title>
        <authorList>
            <consortium name="Drosophila 12 genomes consortium"/>
        </authorList>
    </citation>
    <scope>NUCLEOTIDE SEQUENCE [LARGE SCALE GENOMIC DNA]</scope>
    <source>
        <strain evidence="4">Rob3c / Tucson 14021-0248.25</strain>
    </source>
</reference>
<evidence type="ECO:0000250" key="1"/>
<evidence type="ECO:0000250" key="2">
    <source>
        <dbReference type="UniProtKB" id="P20933"/>
    </source>
</evidence>
<evidence type="ECO:0000255" key="3"/>
<evidence type="ECO:0000312" key="4">
    <source>
        <dbReference type="EMBL" id="EDW56696.1"/>
    </source>
</evidence>
<accession>B4I7X1</accession>
<name>ASPG2_DROSE</name>
<feature type="signal peptide" evidence="3">
    <location>
        <begin position="1"/>
        <end position="22"/>
    </location>
</feature>
<feature type="chain" id="PRO_0000384146" description="L-asparaginase-like protein GM15681">
    <location>
        <begin position="23"/>
        <end position="397"/>
    </location>
</feature>
<feature type="disulfide bond" evidence="2">
    <location>
        <begin position="90"/>
        <end position="95"/>
    </location>
</feature>
<feature type="disulfide bond" evidence="2">
    <location>
        <begin position="189"/>
        <end position="205"/>
    </location>
</feature>
<feature type="disulfide bond" evidence="1">
    <location>
        <begin position="344"/>
        <end position="371"/>
    </location>
</feature>
<sequence length="397" mass="43638">MLAQSCCLRLLILLLLFTSICSVPKKSLKYFRNRKLRERRIKLFGTKKTEIQSLLISTWNYTDANLQAWSVLQQGHRRTRQAVIQGCMACQNQRCGLLLAGRSSPDTEGALTLEAAIMDGESLEYGAVAGMDGVRNAILVADAVLKYTKHSVLVGKSATKFARSLGYKEEYLTDARTKNVLKKWSSNGCQPNFWRDVHPSPAENCGPYSPLPEHLHQHPMHQEYAITQGQHDQLAFLALDAEGKFHVASQSSGAQFRIPGRVGDSAVPGAGIYADNEVGGAVASGDGDVLMRHLPAFLAVEAMRAGKDPDQAAEWVVQRLLRHNTEFNGAVVVVNRRGIYAAACAGLDEFNFVVSGGKEYLSMARVERVKCLERENEVIDGGPKGLFPTIPEKQEVP</sequence>
<gene>
    <name type="ORF">GM15681</name>
</gene>
<proteinExistence type="inferred from homology"/>
<comment type="similarity">
    <text evidence="3">Belongs to the Ntn-hydrolase family.</text>
</comment>
<dbReference type="EMBL" id="CH480824">
    <property type="protein sequence ID" value="EDW56696.1"/>
    <property type="molecule type" value="Genomic_DNA"/>
</dbReference>
<dbReference type="SMR" id="B4I7X1"/>
<dbReference type="STRING" id="7238.B4I7X1"/>
<dbReference type="MEROPS" id="T02.A04"/>
<dbReference type="EnsemblMetazoa" id="FBtr0198666">
    <property type="protein sequence ID" value="FBpp0197158"/>
    <property type="gene ID" value="FBgn0170597"/>
</dbReference>
<dbReference type="EnsemblMetazoa" id="XM_002039795.1">
    <property type="protein sequence ID" value="XP_002039831.1"/>
    <property type="gene ID" value="LOC6615449"/>
</dbReference>
<dbReference type="GeneID" id="6615449"/>
<dbReference type="KEGG" id="dse:6615449"/>
<dbReference type="HOGENOM" id="CLU_021603_0_0_1"/>
<dbReference type="OMA" id="QAVIQGC"/>
<dbReference type="OrthoDB" id="50743at7215"/>
<dbReference type="PhylomeDB" id="B4I7X1"/>
<dbReference type="Proteomes" id="UP000001292">
    <property type="component" value="Unassembled WGS sequence"/>
</dbReference>
<dbReference type="GO" id="GO:0005764">
    <property type="term" value="C:lysosome"/>
    <property type="evidence" value="ECO:0007669"/>
    <property type="project" value="TreeGrafter"/>
</dbReference>
<dbReference type="GO" id="GO:0003948">
    <property type="term" value="F:N4-(beta-N-acetylglucosaminyl)-L-asparaginase activity"/>
    <property type="evidence" value="ECO:0007669"/>
    <property type="project" value="TreeGrafter"/>
</dbReference>
<dbReference type="CDD" id="cd04513">
    <property type="entry name" value="Glycosylasparaginase"/>
    <property type="match status" value="1"/>
</dbReference>
<dbReference type="FunFam" id="3.60.20.30:FF:000010">
    <property type="entry name" value="L-asparaginase-like protein GM15681"/>
    <property type="match status" value="1"/>
</dbReference>
<dbReference type="Gene3D" id="3.60.20.30">
    <property type="entry name" value="(Glycosyl)asparaginase"/>
    <property type="match status" value="1"/>
</dbReference>
<dbReference type="InterPro" id="IPR029055">
    <property type="entry name" value="Ntn_hydrolases_N"/>
</dbReference>
<dbReference type="InterPro" id="IPR000246">
    <property type="entry name" value="Peptidase_T2"/>
</dbReference>
<dbReference type="PANTHER" id="PTHR10188">
    <property type="entry name" value="L-ASPARAGINASE"/>
    <property type="match status" value="1"/>
</dbReference>
<dbReference type="PANTHER" id="PTHR10188:SF6">
    <property type="entry name" value="N(4)-(BETA-N-ACETYLGLUCOSAMINYL)-L-ASPARAGINASE"/>
    <property type="match status" value="1"/>
</dbReference>
<dbReference type="Pfam" id="PF01112">
    <property type="entry name" value="Asparaginase_2"/>
    <property type="match status" value="1"/>
</dbReference>
<dbReference type="SUPFAM" id="SSF56235">
    <property type="entry name" value="N-terminal nucleophile aminohydrolases (Ntn hydrolases)"/>
    <property type="match status" value="1"/>
</dbReference>
<keyword id="KW-1015">Disulfide bond</keyword>
<keyword id="KW-1185">Reference proteome</keyword>
<keyword id="KW-0732">Signal</keyword>
<organism>
    <name type="scientific">Drosophila sechellia</name>
    <name type="common">Fruit fly</name>
    <dbReference type="NCBI Taxonomy" id="7238"/>
    <lineage>
        <taxon>Eukaryota</taxon>
        <taxon>Metazoa</taxon>
        <taxon>Ecdysozoa</taxon>
        <taxon>Arthropoda</taxon>
        <taxon>Hexapoda</taxon>
        <taxon>Insecta</taxon>
        <taxon>Pterygota</taxon>
        <taxon>Neoptera</taxon>
        <taxon>Endopterygota</taxon>
        <taxon>Diptera</taxon>
        <taxon>Brachycera</taxon>
        <taxon>Muscomorpha</taxon>
        <taxon>Ephydroidea</taxon>
        <taxon>Drosophilidae</taxon>
        <taxon>Drosophila</taxon>
        <taxon>Sophophora</taxon>
    </lineage>
</organism>
<protein>
    <recommendedName>
        <fullName>L-asparaginase-like protein GM15681</fullName>
    </recommendedName>
</protein>